<accession>O60181</accession>
<reference key="1">
    <citation type="journal article" date="2002" name="Nature">
        <title>The genome sequence of Schizosaccharomyces pombe.</title>
        <authorList>
            <person name="Wood V."/>
            <person name="Gwilliam R."/>
            <person name="Rajandream M.A."/>
            <person name="Lyne M.H."/>
            <person name="Lyne R."/>
            <person name="Stewart A."/>
            <person name="Sgouros J.G."/>
            <person name="Peat N."/>
            <person name="Hayles J."/>
            <person name="Baker S.G."/>
            <person name="Basham D."/>
            <person name="Bowman S."/>
            <person name="Brooks K."/>
            <person name="Brown D."/>
            <person name="Brown S."/>
            <person name="Chillingworth T."/>
            <person name="Churcher C.M."/>
            <person name="Collins M."/>
            <person name="Connor R."/>
            <person name="Cronin A."/>
            <person name="Davis P."/>
            <person name="Feltwell T."/>
            <person name="Fraser A."/>
            <person name="Gentles S."/>
            <person name="Goble A."/>
            <person name="Hamlin N."/>
            <person name="Harris D.E."/>
            <person name="Hidalgo J."/>
            <person name="Hodgson G."/>
            <person name="Holroyd S."/>
            <person name="Hornsby T."/>
            <person name="Howarth S."/>
            <person name="Huckle E.J."/>
            <person name="Hunt S."/>
            <person name="Jagels K."/>
            <person name="James K.D."/>
            <person name="Jones L."/>
            <person name="Jones M."/>
            <person name="Leather S."/>
            <person name="McDonald S."/>
            <person name="McLean J."/>
            <person name="Mooney P."/>
            <person name="Moule S."/>
            <person name="Mungall K.L."/>
            <person name="Murphy L.D."/>
            <person name="Niblett D."/>
            <person name="Odell C."/>
            <person name="Oliver K."/>
            <person name="O'Neil S."/>
            <person name="Pearson D."/>
            <person name="Quail M.A."/>
            <person name="Rabbinowitsch E."/>
            <person name="Rutherford K.M."/>
            <person name="Rutter S."/>
            <person name="Saunders D."/>
            <person name="Seeger K."/>
            <person name="Sharp S."/>
            <person name="Skelton J."/>
            <person name="Simmonds M.N."/>
            <person name="Squares R."/>
            <person name="Squares S."/>
            <person name="Stevens K."/>
            <person name="Taylor K."/>
            <person name="Taylor R.G."/>
            <person name="Tivey A."/>
            <person name="Walsh S.V."/>
            <person name="Warren T."/>
            <person name="Whitehead S."/>
            <person name="Woodward J.R."/>
            <person name="Volckaert G."/>
            <person name="Aert R."/>
            <person name="Robben J."/>
            <person name="Grymonprez B."/>
            <person name="Weltjens I."/>
            <person name="Vanstreels E."/>
            <person name="Rieger M."/>
            <person name="Schaefer M."/>
            <person name="Mueller-Auer S."/>
            <person name="Gabel C."/>
            <person name="Fuchs M."/>
            <person name="Duesterhoeft A."/>
            <person name="Fritzc C."/>
            <person name="Holzer E."/>
            <person name="Moestl D."/>
            <person name="Hilbert H."/>
            <person name="Borzym K."/>
            <person name="Langer I."/>
            <person name="Beck A."/>
            <person name="Lehrach H."/>
            <person name="Reinhardt R."/>
            <person name="Pohl T.M."/>
            <person name="Eger P."/>
            <person name="Zimmermann W."/>
            <person name="Wedler H."/>
            <person name="Wambutt R."/>
            <person name="Purnelle B."/>
            <person name="Goffeau A."/>
            <person name="Cadieu E."/>
            <person name="Dreano S."/>
            <person name="Gloux S."/>
            <person name="Lelaure V."/>
            <person name="Mottier S."/>
            <person name="Galibert F."/>
            <person name="Aves S.J."/>
            <person name="Xiang Z."/>
            <person name="Hunt C."/>
            <person name="Moore K."/>
            <person name="Hurst S.M."/>
            <person name="Lucas M."/>
            <person name="Rochet M."/>
            <person name="Gaillardin C."/>
            <person name="Tallada V.A."/>
            <person name="Garzon A."/>
            <person name="Thode G."/>
            <person name="Daga R.R."/>
            <person name="Cruzado L."/>
            <person name="Jimenez J."/>
            <person name="Sanchez M."/>
            <person name="del Rey F."/>
            <person name="Benito J."/>
            <person name="Dominguez A."/>
            <person name="Revuelta J.L."/>
            <person name="Moreno S."/>
            <person name="Armstrong J."/>
            <person name="Forsburg S.L."/>
            <person name="Cerutti L."/>
            <person name="Lowe T."/>
            <person name="McCombie W.R."/>
            <person name="Paulsen I."/>
            <person name="Potashkin J."/>
            <person name="Shpakovski G.V."/>
            <person name="Ussery D."/>
            <person name="Barrell B.G."/>
            <person name="Nurse P."/>
        </authorList>
    </citation>
    <scope>NUCLEOTIDE SEQUENCE [LARGE SCALE GENOMIC DNA]</scope>
    <source>
        <strain>972 / ATCC 24843</strain>
    </source>
</reference>
<organism>
    <name type="scientific">Schizosaccharomyces pombe (strain 972 / ATCC 24843)</name>
    <name type="common">Fission yeast</name>
    <dbReference type="NCBI Taxonomy" id="284812"/>
    <lineage>
        <taxon>Eukaryota</taxon>
        <taxon>Fungi</taxon>
        <taxon>Dikarya</taxon>
        <taxon>Ascomycota</taxon>
        <taxon>Taphrinomycotina</taxon>
        <taxon>Schizosaccharomycetes</taxon>
        <taxon>Schizosaccharomycetales</taxon>
        <taxon>Schizosaccharomycetaceae</taxon>
        <taxon>Schizosaccharomyces</taxon>
    </lineage>
</organism>
<keyword id="KW-0318">Glutathionylation</keyword>
<keyword id="KW-0456">Lyase</keyword>
<keyword id="KW-0460">Magnesium</keyword>
<keyword id="KW-0464">Manganese</keyword>
<keyword id="KW-0479">Metal-binding</keyword>
<keyword id="KW-1185">Reference proteome</keyword>
<keyword id="KW-0686">Riboflavin biosynthesis</keyword>
<comment type="function">
    <text evidence="1">Catalyzes the conversion of D-ribulose 5-phosphate to formate and 3,4-dihydroxy-2-butanone 4-phosphate.</text>
</comment>
<comment type="catalytic activity">
    <reaction>
        <text>D-ribulose 5-phosphate = (2S)-2-hydroxy-3-oxobutyl phosphate + formate + H(+)</text>
        <dbReference type="Rhea" id="RHEA:18457"/>
        <dbReference type="ChEBI" id="CHEBI:15378"/>
        <dbReference type="ChEBI" id="CHEBI:15740"/>
        <dbReference type="ChEBI" id="CHEBI:58121"/>
        <dbReference type="ChEBI" id="CHEBI:58830"/>
        <dbReference type="EC" id="4.1.99.12"/>
    </reaction>
</comment>
<comment type="cofactor">
    <cofactor evidence="1">
        <name>Mg(2+)</name>
        <dbReference type="ChEBI" id="CHEBI:18420"/>
    </cofactor>
    <cofactor evidence="1">
        <name>Mn(2+)</name>
        <dbReference type="ChEBI" id="CHEBI:29035"/>
    </cofactor>
    <text evidence="1">Binds 2 divalent metal cations per subunit. Magnesium or manganese.</text>
</comment>
<comment type="pathway">
    <text>Cofactor biosynthesis; riboflavin biosynthesis; 2-hydroxy-3-oxobutyl phosphate from D-ribulose 5-phosphate: step 1/1.</text>
</comment>
<comment type="subunit">
    <text evidence="1">Homodimer.</text>
</comment>
<comment type="PTM">
    <text evidence="4">S-glutathionylation is reversible and dependent on a glutaredoxin.</text>
</comment>
<comment type="similarity">
    <text evidence="5">Belongs to the DHBP synthase family.</text>
</comment>
<name>RIB3_SCHPO</name>
<evidence type="ECO:0000250" key="1"/>
<evidence type="ECO:0000250" key="2">
    <source>
        <dbReference type="UniProtKB" id="Q5A3V6"/>
    </source>
</evidence>
<evidence type="ECO:0000250" key="3">
    <source>
        <dbReference type="UniProtKB" id="Q8TG90"/>
    </source>
</evidence>
<evidence type="ECO:0000250" key="4">
    <source>
        <dbReference type="UniProtKB" id="Q99258"/>
    </source>
</evidence>
<evidence type="ECO:0000305" key="5"/>
<dbReference type="EC" id="4.1.99.12"/>
<dbReference type="EMBL" id="CU329671">
    <property type="protein sequence ID" value="CAA18874.1"/>
    <property type="molecule type" value="Genomic_DNA"/>
</dbReference>
<dbReference type="PIR" id="T39940">
    <property type="entry name" value="T39940"/>
</dbReference>
<dbReference type="SMR" id="O60181"/>
<dbReference type="FunCoup" id="O60181">
    <property type="interactions" value="126"/>
</dbReference>
<dbReference type="STRING" id="284812.O60181"/>
<dbReference type="iPTMnet" id="O60181"/>
<dbReference type="PaxDb" id="4896-SPBC23E6.06c.1"/>
<dbReference type="EnsemblFungi" id="SPBC23E6.06c.1">
    <property type="protein sequence ID" value="SPBC23E6.06c.1:pep"/>
    <property type="gene ID" value="SPBC23E6.06c"/>
</dbReference>
<dbReference type="KEGG" id="spo:2540577"/>
<dbReference type="PomBase" id="SPBC23E6.06c"/>
<dbReference type="VEuPathDB" id="FungiDB:SPBC23E6.06c"/>
<dbReference type="eggNOG" id="KOG1284">
    <property type="taxonomic scope" value="Eukaryota"/>
</dbReference>
<dbReference type="HOGENOM" id="CLU_020273_3_0_1"/>
<dbReference type="InParanoid" id="O60181"/>
<dbReference type="OMA" id="DAGGLIC"/>
<dbReference type="PhylomeDB" id="O60181"/>
<dbReference type="UniPathway" id="UPA00275">
    <property type="reaction ID" value="UER00399"/>
</dbReference>
<dbReference type="PRO" id="PR:O60181"/>
<dbReference type="Proteomes" id="UP000002485">
    <property type="component" value="Chromosome II"/>
</dbReference>
<dbReference type="GO" id="GO:0005829">
    <property type="term" value="C:cytosol"/>
    <property type="evidence" value="ECO:0007005"/>
    <property type="project" value="PomBase"/>
</dbReference>
<dbReference type="GO" id="GO:0005758">
    <property type="term" value="C:mitochondrial intermembrane space"/>
    <property type="evidence" value="ECO:0000318"/>
    <property type="project" value="GO_Central"/>
</dbReference>
<dbReference type="GO" id="GO:0005634">
    <property type="term" value="C:nucleus"/>
    <property type="evidence" value="ECO:0007005"/>
    <property type="project" value="PomBase"/>
</dbReference>
<dbReference type="GO" id="GO:0008686">
    <property type="term" value="F:3,4-dihydroxy-2-butanone-4-phosphate synthase activity"/>
    <property type="evidence" value="ECO:0000318"/>
    <property type="project" value="GO_Central"/>
</dbReference>
<dbReference type="GO" id="GO:0046872">
    <property type="term" value="F:metal ion binding"/>
    <property type="evidence" value="ECO:0007669"/>
    <property type="project" value="UniProtKB-KW"/>
</dbReference>
<dbReference type="GO" id="GO:0009231">
    <property type="term" value="P:riboflavin biosynthetic process"/>
    <property type="evidence" value="ECO:0000318"/>
    <property type="project" value="GO_Central"/>
</dbReference>
<dbReference type="FunFam" id="3.90.870.10:FF:000002">
    <property type="entry name" value="3,4-dihydroxy-2-butanone 4-phosphate synthase"/>
    <property type="match status" value="1"/>
</dbReference>
<dbReference type="Gene3D" id="3.90.870.10">
    <property type="entry name" value="DHBP synthase"/>
    <property type="match status" value="1"/>
</dbReference>
<dbReference type="HAMAP" id="MF_00180">
    <property type="entry name" value="RibB"/>
    <property type="match status" value="1"/>
</dbReference>
<dbReference type="InterPro" id="IPR017945">
    <property type="entry name" value="DHBP_synth_RibB-like_a/b_dom"/>
</dbReference>
<dbReference type="InterPro" id="IPR000422">
    <property type="entry name" value="DHBP_synthase_RibB"/>
</dbReference>
<dbReference type="NCBIfam" id="TIGR00506">
    <property type="entry name" value="ribB"/>
    <property type="match status" value="1"/>
</dbReference>
<dbReference type="PANTHER" id="PTHR21327:SF18">
    <property type="entry name" value="3,4-DIHYDROXY-2-BUTANONE 4-PHOSPHATE SYNTHASE"/>
    <property type="match status" value="1"/>
</dbReference>
<dbReference type="PANTHER" id="PTHR21327">
    <property type="entry name" value="GTP CYCLOHYDROLASE II-RELATED"/>
    <property type="match status" value="1"/>
</dbReference>
<dbReference type="Pfam" id="PF00926">
    <property type="entry name" value="DHBP_synthase"/>
    <property type="match status" value="1"/>
</dbReference>
<dbReference type="SUPFAM" id="SSF55821">
    <property type="entry name" value="YrdC/RibB"/>
    <property type="match status" value="1"/>
</dbReference>
<proteinExistence type="inferred from homology"/>
<sequence length="204" mass="22564">MLASIEEAVNDFRDGKFLIVLDDETRENEGDLIIAGCKVTTEQMAFLVRHSSGYVCVPMTGERLDSLEIPMMVDNNEDRMRTAYAVTLDYANGTTTGISAHDRALTTRQLANPEVTSPREFNRPGHIVPLRARDGGVLERDGHTEAAVDLCKLAGLPPVGAICELVREEDGLMSRFDDCISFGKKWGIKVITIESLKSYIKGRM</sequence>
<feature type="chain" id="PRO_0000151828" description="3,4-dihydroxy-2-butanone 4-phosphate synthase">
    <location>
        <begin position="1"/>
        <end position="204"/>
    </location>
</feature>
<feature type="binding site" evidence="3">
    <location>
        <position position="27"/>
    </location>
    <ligand>
        <name>Mg(2+)</name>
        <dbReference type="ChEBI" id="CHEBI:18420"/>
        <label>1</label>
    </ligand>
</feature>
<feature type="binding site" evidence="3">
    <location>
        <position position="27"/>
    </location>
    <ligand>
        <name>Mg(2+)</name>
        <dbReference type="ChEBI" id="CHEBI:18420"/>
        <label>2</label>
    </ligand>
</feature>
<feature type="binding site" evidence="2">
    <location>
        <position position="31"/>
    </location>
    <ligand>
        <name>D-ribulose 5-phosphate</name>
        <dbReference type="ChEBI" id="CHEBI:58121"/>
    </ligand>
</feature>
<feature type="binding site" evidence="2">
    <location>
        <position position="82"/>
    </location>
    <ligand>
        <name>D-ribulose 5-phosphate</name>
        <dbReference type="ChEBI" id="CHEBI:58121"/>
    </ligand>
</feature>
<feature type="binding site" evidence="2">
    <location>
        <begin position="140"/>
        <end position="144"/>
    </location>
    <ligand>
        <name>D-ribulose 5-phosphate</name>
        <dbReference type="ChEBI" id="CHEBI:58121"/>
    </ligand>
</feature>
<feature type="binding site" evidence="3">
    <location>
        <position position="143"/>
    </location>
    <ligand>
        <name>Mg(2+)</name>
        <dbReference type="ChEBI" id="CHEBI:18420"/>
        <label>2</label>
    </ligand>
</feature>
<feature type="site" description="Essential for catalytic activity" evidence="1">
    <location>
        <position position="126"/>
    </location>
</feature>
<feature type="site" description="Essential for catalytic activity" evidence="1">
    <location>
        <position position="164"/>
    </location>
</feature>
<feature type="modified residue" description="S-glutathionyl cysteine" evidence="4">
    <location>
        <position position="56"/>
    </location>
</feature>
<gene>
    <name type="ORF">SPBC23E6.06c</name>
</gene>
<protein>
    <recommendedName>
        <fullName>3,4-dihydroxy-2-butanone 4-phosphate synthase</fullName>
        <shortName>DHBP synthase</shortName>
        <ecNumber>4.1.99.12</ecNumber>
    </recommendedName>
</protein>